<dbReference type="EMBL" id="M25784">
    <property type="protein sequence ID" value="AAA53371.1"/>
    <property type="molecule type" value="mRNA"/>
</dbReference>
<dbReference type="EMBL" id="M55644">
    <property type="protein sequence ID" value="AAA48677.1"/>
    <property type="molecule type" value="mRNA"/>
</dbReference>
<dbReference type="EMBL" id="AF121346">
    <property type="protein sequence ID" value="AAD23569.1"/>
    <property type="molecule type" value="Genomic_DNA"/>
</dbReference>
<dbReference type="EMBL" id="AY545055">
    <property type="protein sequence ID" value="AAT73770.1"/>
    <property type="molecule type" value="Genomic_DNA"/>
</dbReference>
<dbReference type="EMBL" id="X61199">
    <property type="status" value="NOT_ANNOTATED_CDS"/>
    <property type="molecule type" value="mRNA"/>
</dbReference>
<dbReference type="PIR" id="A30230">
    <property type="entry name" value="A30230"/>
</dbReference>
<dbReference type="RefSeq" id="NP_990753.1">
    <property type="nucleotide sequence ID" value="NM_205422.1"/>
</dbReference>
<dbReference type="PDB" id="3SAO">
    <property type="method" value="X-ray"/>
    <property type="resolution" value="1.80 A"/>
    <property type="chains" value="A/B=23-178"/>
</dbReference>
<dbReference type="PDBsum" id="3SAO"/>
<dbReference type="SMR" id="P21760"/>
<dbReference type="FunCoup" id="P21760">
    <property type="interactions" value="5"/>
</dbReference>
<dbReference type="STRING" id="9031.ENSGALP00000044621"/>
<dbReference type="PaxDb" id="9031-ENSGALP00000039691"/>
<dbReference type="GeneID" id="396393"/>
<dbReference type="KEGG" id="gga:396393"/>
<dbReference type="CTD" id="396393"/>
<dbReference type="VEuPathDB" id="HostDB:geneid_396393"/>
<dbReference type="eggNOG" id="ENOG502S13A">
    <property type="taxonomic scope" value="Eukaryota"/>
</dbReference>
<dbReference type="InParanoid" id="P21760"/>
<dbReference type="OrthoDB" id="9627583at2759"/>
<dbReference type="PhylomeDB" id="P21760"/>
<dbReference type="EvolutionaryTrace" id="P21760"/>
<dbReference type="PRO" id="PR:P21760"/>
<dbReference type="Proteomes" id="UP000000539">
    <property type="component" value="Unassembled WGS sequence"/>
</dbReference>
<dbReference type="GO" id="GO:0005615">
    <property type="term" value="C:extracellular space"/>
    <property type="evidence" value="ECO:0000314"/>
    <property type="project" value="AgBase"/>
</dbReference>
<dbReference type="GO" id="GO:0050544">
    <property type="term" value="F:arachidonate binding"/>
    <property type="evidence" value="ECO:0000314"/>
    <property type="project" value="AgBase"/>
</dbReference>
<dbReference type="GO" id="GO:0005504">
    <property type="term" value="F:fatty acid binding"/>
    <property type="evidence" value="ECO:0000314"/>
    <property type="project" value="AgBase"/>
</dbReference>
<dbReference type="GO" id="GO:0070539">
    <property type="term" value="F:linoleic acid binding"/>
    <property type="evidence" value="ECO:0000314"/>
    <property type="project" value="AgBase"/>
</dbReference>
<dbReference type="GO" id="GO:0070538">
    <property type="term" value="F:oleic acid binding"/>
    <property type="evidence" value="ECO:0000314"/>
    <property type="project" value="AgBase"/>
</dbReference>
<dbReference type="GO" id="GO:0070540">
    <property type="term" value="F:stearic acid binding"/>
    <property type="evidence" value="ECO:0000314"/>
    <property type="project" value="AgBase"/>
</dbReference>
<dbReference type="GO" id="GO:0006953">
    <property type="term" value="P:acute-phase response"/>
    <property type="evidence" value="ECO:0000270"/>
    <property type="project" value="AgBase"/>
</dbReference>
<dbReference type="GO" id="GO:0006915">
    <property type="term" value="P:apoptotic process"/>
    <property type="evidence" value="ECO:0000314"/>
    <property type="project" value="AgBase"/>
</dbReference>
<dbReference type="GO" id="GO:0030154">
    <property type="term" value="P:cell differentiation"/>
    <property type="evidence" value="ECO:0000315"/>
    <property type="project" value="AgBase"/>
</dbReference>
<dbReference type="GO" id="GO:0008283">
    <property type="term" value="P:cell population proliferation"/>
    <property type="evidence" value="ECO:0000315"/>
    <property type="project" value="WormBase"/>
</dbReference>
<dbReference type="GO" id="GO:0071399">
    <property type="term" value="P:cellular response to linoleic acid"/>
    <property type="evidence" value="ECO:0000314"/>
    <property type="project" value="AgBase"/>
</dbReference>
<dbReference type="GO" id="GO:0002062">
    <property type="term" value="P:chondrocyte differentiation"/>
    <property type="evidence" value="ECO:0000270"/>
    <property type="project" value="AgBase"/>
</dbReference>
<dbReference type="GO" id="GO:0003415">
    <property type="term" value="P:chondrocyte hypertrophy"/>
    <property type="evidence" value="ECO:0000270"/>
    <property type="project" value="AgBase"/>
</dbReference>
<dbReference type="GO" id="GO:0042742">
    <property type="term" value="P:defense response to bacterium"/>
    <property type="evidence" value="ECO:0007669"/>
    <property type="project" value="UniProtKB-KW"/>
</dbReference>
<dbReference type="GO" id="GO:0009792">
    <property type="term" value="P:embryo development ending in birth or egg hatching"/>
    <property type="evidence" value="ECO:0000304"/>
    <property type="project" value="AgBase"/>
</dbReference>
<dbReference type="GO" id="GO:0055089">
    <property type="term" value="P:fatty acid homeostasis"/>
    <property type="evidence" value="ECO:0000315"/>
    <property type="project" value="AgBase"/>
</dbReference>
<dbReference type="GO" id="GO:0015908">
    <property type="term" value="P:fatty acid transport"/>
    <property type="evidence" value="ECO:0000315"/>
    <property type="project" value="AgBase"/>
</dbReference>
<dbReference type="GO" id="GO:0007507">
    <property type="term" value="P:heart development"/>
    <property type="evidence" value="ECO:0000270"/>
    <property type="project" value="AgBase"/>
</dbReference>
<dbReference type="GO" id="GO:0006954">
    <property type="term" value="P:inflammatory response"/>
    <property type="evidence" value="ECO:0000314"/>
    <property type="project" value="AgBase"/>
</dbReference>
<dbReference type="GO" id="GO:0045087">
    <property type="term" value="P:innate immune response"/>
    <property type="evidence" value="ECO:0007669"/>
    <property type="project" value="UniProtKB-KW"/>
</dbReference>
<dbReference type="GO" id="GO:0006629">
    <property type="term" value="P:lipid metabolic process"/>
    <property type="evidence" value="ECO:0000303"/>
    <property type="project" value="AgBase"/>
</dbReference>
<dbReference type="GO" id="GO:0015909">
    <property type="term" value="P:long-chain fatty acid transport"/>
    <property type="evidence" value="ECO:0000304"/>
    <property type="project" value="AgBase"/>
</dbReference>
<dbReference type="GO" id="GO:0055001">
    <property type="term" value="P:muscle cell development"/>
    <property type="evidence" value="ECO:0000304"/>
    <property type="project" value="AgBase"/>
</dbReference>
<dbReference type="GO" id="GO:0043066">
    <property type="term" value="P:negative regulation of apoptotic process"/>
    <property type="evidence" value="ECO:0000315"/>
    <property type="project" value="AgBase"/>
</dbReference>
<dbReference type="GO" id="GO:0008284">
    <property type="term" value="P:positive regulation of cell population proliferation"/>
    <property type="evidence" value="ECO:0000315"/>
    <property type="project" value="AgBase"/>
</dbReference>
<dbReference type="GO" id="GO:0032332">
    <property type="term" value="P:positive regulation of chondrocyte differentiation"/>
    <property type="evidence" value="ECO:0000315"/>
    <property type="project" value="AgBase"/>
</dbReference>
<dbReference type="GO" id="GO:0045663">
    <property type="term" value="P:positive regulation of myoblast differentiation"/>
    <property type="evidence" value="ECO:0000315"/>
    <property type="project" value="AgBase"/>
</dbReference>
<dbReference type="GO" id="GO:0010831">
    <property type="term" value="P:positive regulation of myotube differentiation"/>
    <property type="evidence" value="ECO:0000315"/>
    <property type="project" value="AgBase"/>
</dbReference>
<dbReference type="GO" id="GO:0051412">
    <property type="term" value="P:response to corticosterone"/>
    <property type="evidence" value="ECO:0000314"/>
    <property type="project" value="AgBase"/>
</dbReference>
<dbReference type="GO" id="GO:0034097">
    <property type="term" value="P:response to cytokine"/>
    <property type="evidence" value="ECO:0000270"/>
    <property type="project" value="AgBase"/>
</dbReference>
<dbReference type="GO" id="GO:0070543">
    <property type="term" value="P:response to linoleic acid"/>
    <property type="evidence" value="ECO:0000314"/>
    <property type="project" value="AgBase"/>
</dbReference>
<dbReference type="GO" id="GO:0032496">
    <property type="term" value="P:response to lipopolysaccharide"/>
    <property type="evidence" value="ECO:0000270"/>
    <property type="project" value="AgBase"/>
</dbReference>
<dbReference type="GO" id="GO:0009636">
    <property type="term" value="P:response to toxic substance"/>
    <property type="evidence" value="ECO:0000304"/>
    <property type="project" value="AgBase"/>
</dbReference>
<dbReference type="GO" id="GO:0009410">
    <property type="term" value="P:response to xenobiotic stimulus"/>
    <property type="evidence" value="ECO:0000315"/>
    <property type="project" value="AgBase"/>
</dbReference>
<dbReference type="CDD" id="cd19439">
    <property type="entry name" value="lipocalin_Ex-FABP-like"/>
    <property type="match status" value="1"/>
</dbReference>
<dbReference type="FunFam" id="2.40.128.20:FF:000043">
    <property type="entry name" value="Extracellular fatty acid-binding protein"/>
    <property type="match status" value="1"/>
</dbReference>
<dbReference type="Gene3D" id="2.40.128.20">
    <property type="match status" value="1"/>
</dbReference>
<dbReference type="InterPro" id="IPR012674">
    <property type="entry name" value="Calycin"/>
</dbReference>
<dbReference type="InterPro" id="IPR002345">
    <property type="entry name" value="Lipocalin"/>
</dbReference>
<dbReference type="InterPro" id="IPR022272">
    <property type="entry name" value="Lipocalin_CS"/>
</dbReference>
<dbReference type="InterPro" id="IPR000566">
    <property type="entry name" value="Lipocln_cytosolic_FA-bd_dom"/>
</dbReference>
<dbReference type="PANTHER" id="PTHR11430">
    <property type="entry name" value="LIPOCALIN"/>
    <property type="match status" value="1"/>
</dbReference>
<dbReference type="PANTHER" id="PTHR11430:SF77">
    <property type="entry name" value="LIPOCALIN-LIKE 1 PROTEIN"/>
    <property type="match status" value="1"/>
</dbReference>
<dbReference type="Pfam" id="PF00061">
    <property type="entry name" value="Lipocalin"/>
    <property type="match status" value="1"/>
</dbReference>
<dbReference type="PRINTS" id="PR00179">
    <property type="entry name" value="LIPOCALIN"/>
</dbReference>
<dbReference type="PRINTS" id="PR01254">
    <property type="entry name" value="PGNDSYNTHASE"/>
</dbReference>
<dbReference type="SUPFAM" id="SSF50814">
    <property type="entry name" value="Lipocalins"/>
    <property type="match status" value="1"/>
</dbReference>
<dbReference type="PROSITE" id="PS00213">
    <property type="entry name" value="LIPOCALIN"/>
    <property type="match status" value="1"/>
</dbReference>
<reference key="1">
    <citation type="journal article" date="1989" name="Mol. Cell. Biol.">
        <title>Rapid repression of quiescence-specific gene expression by epidermal growth factor, insulin, and pp60v-src.</title>
        <authorList>
            <person name="Bedard P.-A."/>
            <person name="Yannoni Y."/>
            <person name="Simmons D.L."/>
            <person name="Erikson R.L."/>
        </authorList>
    </citation>
    <scope>NUCLEOTIDE SEQUENCE [MRNA]</scope>
</reference>
<reference key="2">
    <citation type="journal article" date="1992" name="J. Biol. Chem.">
        <title>Expression, regulation, and tissue distribution of the Ch21 protein during chicken embryogenesis.</title>
        <authorList>
            <person name="Dozin B."/>
            <person name="Descalzi F."/>
            <person name="Briata L."/>
            <person name="Hayashi M."/>
            <person name="Gentili C."/>
            <person name="Hayashi K."/>
            <person name="Quarto R."/>
            <person name="Cancedda R."/>
        </authorList>
    </citation>
    <scope>NUCLEOTIDE SEQUENCE [MRNA]</scope>
</reference>
<reference key="3">
    <citation type="journal article" date="2004" name="J. Cell. Physiol.">
        <title>Differentiation-dependent activation of the extracellular fatty acid binding protein (Ex-FABP) gene during chondrogenesis.</title>
        <authorList>
            <person name="Giannoni P."/>
            <person name="Zambotti A."/>
            <person name="Pagano A."/>
            <person name="Cancedda R."/>
            <person name="Dozin B."/>
        </authorList>
    </citation>
    <scope>NUCLEOTIDE SEQUENCE [GENOMIC DNA]</scope>
    <source>
        <strain>Leghorn</strain>
    </source>
</reference>
<reference key="4">
    <citation type="submission" date="2004-02" db="EMBL/GenBank/DDBJ databases">
        <authorList>
            <person name="Qiu X."/>
            <person name="Li N."/>
        </authorList>
    </citation>
    <scope>NUCLEOTIDE SEQUENCE [GENOMIC DNA]</scope>
</reference>
<reference key="5">
    <citation type="journal article" date="1990" name="J. Biol. Chem.">
        <title>The Ch21 protein, developmentally regulated in chick embryo, belongs to the superfamily of lipophilic molecule carrier proteins.</title>
        <authorList>
            <person name="Cancedda F.D."/>
            <person name="Dozin B."/>
            <person name="Rossi F."/>
            <person name="Molina F."/>
            <person name="Cancedda R."/>
            <person name="Negri A."/>
            <person name="Ronchi S."/>
        </authorList>
    </citation>
    <scope>NUCLEOTIDE SEQUENCE [MRNA] OF 25-178</scope>
    <scope>PARTIAL PROTEIN SEQUENCE</scope>
</reference>
<reference key="6">
    <citation type="journal article" date="1990" name="Biochem. Biophys. Res. Commun.">
        <title>The amino terminal sequence of the developmentally regulated Ch21 protein shows homology with amino terminal sequences of low molecular weight proteins binding hydrophobic molecules.</title>
        <authorList>
            <person name="Cancedda F.D."/>
            <person name="Asaro D."/>
            <person name="Molina F."/>
            <person name="Cancedda R."/>
            <person name="Caruso C."/>
            <person name="Camardella L."/>
            <person name="Negri A."/>
            <person name="Ronchi S."/>
        </authorList>
    </citation>
    <scope>PROTEIN SEQUENCE OF 21-48</scope>
</reference>
<reference key="7">
    <citation type="journal article" date="2014" name="J. Agric. Food Chem.">
        <title>Differential abundance of egg white proteins in laying hens treated with corticosterone.</title>
        <authorList>
            <person name="Kim J."/>
            <person name="Choi Y.H."/>
        </authorList>
    </citation>
    <scope>PROTEIN SEQUENCE OF 27-49; 33-51; 59-79; 114-124; 128-135; 138-152; 140-152 AND 155-178</scope>
    <scope>TISSUE SPECIFICITY</scope>
    <scope>INDUCTION</scope>
    <scope>IDENTIFICATION BY MASS SPECTROMETRY</scope>
    <source>
        <tissue evidence="4">Egg white</tissue>
    </source>
</reference>
<reference key="8">
    <citation type="journal article" date="1992" name="Oncogene">
        <title>Identification of genes differentially expressed in two types of v-myb-transformed avian myelomonocytic cells.</title>
        <authorList>
            <person name="Nakano T."/>
            <person name="Graf T."/>
        </authorList>
    </citation>
    <scope>NUCLEOTIDE SEQUENCE OF 103-178</scope>
    <source>
        <strain>White leghorn</strain>
        <tissue>Bone marrow</tissue>
    </source>
</reference>
<reference key="9">
    <citation type="journal article" date="1996" name="J. Biol. Chem.">
        <title>The developmentally regulated avian Ch21 lipocalin is an extracellular fatty acid-binding protein.</title>
        <authorList>
            <person name="Cancedda F.D."/>
            <person name="Malpeli M."/>
            <person name="Gentili C."/>
            <person name="Di Marzo V."/>
            <person name="Bet P."/>
            <person name="Carlevaro M."/>
            <person name="Cermelli S."/>
            <person name="Cancedda R."/>
        </authorList>
    </citation>
    <scope>CHARACTERIZATION</scope>
</reference>
<reference key="10">
    <citation type="journal article" date="2000" name="Biochim. Biophys. Acta">
        <title>Ex-FABP: a fatty acid binding lipocalin developmentally regulated in chicken endochondral bone formation and myogenesis.</title>
        <authorList>
            <person name="Descalzi Cancedda F."/>
            <person name="Dozin B."/>
            <person name="Zerega B."/>
            <person name="Cermelli S."/>
            <person name="Cancedda R."/>
        </authorList>
    </citation>
    <scope>CHARACTERIZATION</scope>
</reference>
<reference key="11">
    <citation type="journal article" date="2011" name="Structure">
        <title>Galline Ex-FABP is an antibacterial siderocalin and a lysophosphatidic acid sensor functioning through dual ligand specificities.</title>
        <authorList>
            <person name="Correnti C."/>
            <person name="Clifton M.C."/>
            <person name="Abergel R.J."/>
            <person name="Allred B."/>
            <person name="Hoette T.M."/>
            <person name="Ruiz M."/>
            <person name="Cancedda R."/>
            <person name="Raymond K.N."/>
            <person name="Descalzi F."/>
            <person name="Strong R.K."/>
        </authorList>
    </citation>
    <scope>X-RAY CRYSTALLOGRAPHY (1.8 ANGSTROMS) OF 23-178 IN COMPLEX WITH MYRISTOYL LYSOPHOSPHATIDIC ACID AND 2,3-DIHYDROXYBENZOATE</scope>
    <scope>SUBUNIT</scope>
    <scope>SIDEROPHORE-BINDING SITES</scope>
    <scope>DISULFIDE BOND</scope>
</reference>
<gene>
    <name type="primary">EXFABP</name>
</gene>
<keyword id="KW-0002">3D-structure</keyword>
<keyword id="KW-0044">Antibiotic</keyword>
<keyword id="KW-0929">Antimicrobial</keyword>
<keyword id="KW-0903">Direct protein sequencing</keyword>
<keyword id="KW-1015">Disulfide bond</keyword>
<keyword id="KW-0391">Immunity</keyword>
<keyword id="KW-0399">Innate immunity</keyword>
<keyword id="KW-0408">Iron</keyword>
<keyword id="KW-1185">Reference proteome</keyword>
<keyword id="KW-0964">Secreted</keyword>
<keyword id="KW-0732">Signal</keyword>
<keyword id="KW-0813">Transport</keyword>
<sequence length="178" mass="20201">MRTLALSLALALLCLLHTEAAATVPDRSEVAGKWYIVALASNTDFFLREKGKMKMVMARISFLGEDELEVSYAAPSPKGCRKWETTFKKTSDDGELYYSEEAEKTVEVLDTDYKSYAVIFATRVKDGRTLHMMRLYSRSREVSPTAMAIFRKLARERNYTDEMVAVLPSQEECSVDEV</sequence>
<accession>P21760</accession>
<accession>P21928</accession>
<accession>Q6E6M8</accession>
<accession>Q9PWN9</accession>
<evidence type="ECO:0000269" key="1">
    <source>
    </source>
</evidence>
<evidence type="ECO:0000269" key="2">
    <source>
    </source>
</evidence>
<evidence type="ECO:0000269" key="3">
    <source>
    </source>
</evidence>
<evidence type="ECO:0000303" key="4">
    <source>
    </source>
</evidence>
<evidence type="ECO:0000305" key="5"/>
<evidence type="ECO:0000305" key="6">
    <source>
    </source>
</evidence>
<evidence type="ECO:0007744" key="7">
    <source>
        <dbReference type="PDB" id="3SAO"/>
    </source>
</evidence>
<evidence type="ECO:0007829" key="8">
    <source>
        <dbReference type="PDB" id="3SAO"/>
    </source>
</evidence>
<feature type="signal peptide" evidence="2">
    <location>
        <begin position="1"/>
        <end position="20"/>
    </location>
</feature>
<feature type="chain" id="PRO_0000017958" description="Extracellular fatty acid-binding protein">
    <location>
        <begin position="21"/>
        <end position="178"/>
    </location>
</feature>
<feature type="binding site" evidence="6 7">
    <location>
        <position position="43"/>
    </location>
    <ligand>
        <name>enterobactin</name>
        <dbReference type="ChEBI" id="CHEBI:77805"/>
    </ligand>
</feature>
<feature type="binding site" evidence="1 7">
    <location>
        <position position="72"/>
    </location>
    <ligand>
        <name>1-tetradecanoyl-sn-glycerol 3-phosphate</name>
        <dbReference type="ChEBI" id="CHEBI:72683"/>
    </ligand>
</feature>
<feature type="binding site" evidence="1 7">
    <location>
        <position position="104"/>
    </location>
    <ligand>
        <name>1-tetradecanoyl-sn-glycerol 3-phosphate</name>
        <dbReference type="ChEBI" id="CHEBI:72683"/>
    </ligand>
</feature>
<feature type="binding site" evidence="6 7">
    <location>
        <position position="104"/>
    </location>
    <ligand>
        <name>enterobactin</name>
        <dbReference type="ChEBI" id="CHEBI:77805"/>
    </ligand>
</feature>
<feature type="binding site" evidence="6 7">
    <location>
        <position position="123"/>
    </location>
    <ligand>
        <name>enterobactin</name>
        <dbReference type="ChEBI" id="CHEBI:77805"/>
    </ligand>
</feature>
<feature type="binding site" evidence="1 7">
    <location>
        <begin position="134"/>
        <end position="136"/>
    </location>
    <ligand>
        <name>1-tetradecanoyl-sn-glycerol 3-phosphate</name>
        <dbReference type="ChEBI" id="CHEBI:72683"/>
    </ligand>
</feature>
<feature type="binding site" evidence="6 7">
    <location>
        <position position="134"/>
    </location>
    <ligand>
        <name>enterobactin</name>
        <dbReference type="ChEBI" id="CHEBI:77805"/>
    </ligand>
</feature>
<feature type="modified residue" description="Blocked amino end (Ala)">
    <location>
        <position position="21"/>
    </location>
</feature>
<feature type="disulfide bond" evidence="1">
    <location>
        <begin position="80"/>
        <end position="173"/>
    </location>
</feature>
<feature type="sequence conflict" description="In Ref. 2; AAA48677." evidence="5" ref="2">
    <original>L</original>
    <variation>S</variation>
    <location>
        <position position="4"/>
    </location>
</feature>
<feature type="sequence conflict" description="In Ref. 2 and 5." evidence="5" ref="2 5">
    <original>R</original>
    <variation>S</variation>
    <location>
        <position position="27"/>
    </location>
</feature>
<feature type="sequence conflict" description="In Ref. 2 and 5." evidence="5" ref="2 5">
    <original>F</original>
    <variation>S</variation>
    <location>
        <position position="45"/>
    </location>
</feature>
<feature type="sequence conflict" description="In Ref. 1; AAA53371." evidence="5" ref="1">
    <original>F</original>
    <variation>S</variation>
    <location>
        <position position="62"/>
    </location>
</feature>
<feature type="sequence conflict" description="In Ref. 1; AAA53371." evidence="5" ref="1">
    <original>L</original>
    <variation>V</variation>
    <location>
        <position position="96"/>
    </location>
</feature>
<feature type="strand" evidence="8">
    <location>
        <begin position="32"/>
        <end position="40"/>
    </location>
</feature>
<feature type="helix" evidence="8">
    <location>
        <begin position="44"/>
        <end position="49"/>
    </location>
</feature>
<feature type="helix" evidence="8">
    <location>
        <begin position="50"/>
        <end position="52"/>
    </location>
</feature>
<feature type="strand" evidence="8">
    <location>
        <begin position="56"/>
        <end position="63"/>
    </location>
</feature>
<feature type="turn" evidence="8">
    <location>
        <begin position="64"/>
        <end position="66"/>
    </location>
</feature>
<feature type="strand" evidence="8">
    <location>
        <begin position="67"/>
        <end position="74"/>
    </location>
</feature>
<feature type="strand" evidence="8">
    <location>
        <begin position="81"/>
        <end position="88"/>
    </location>
</feature>
<feature type="strand" evidence="8">
    <location>
        <begin position="91"/>
        <end position="94"/>
    </location>
</feature>
<feature type="strand" evidence="8">
    <location>
        <begin position="96"/>
        <end position="99"/>
    </location>
</feature>
<feature type="turn" evidence="8">
    <location>
        <begin position="100"/>
        <end position="103"/>
    </location>
</feature>
<feature type="strand" evidence="8">
    <location>
        <begin position="104"/>
        <end position="111"/>
    </location>
</feature>
<feature type="strand" evidence="8">
    <location>
        <begin position="113"/>
        <end position="125"/>
    </location>
</feature>
<feature type="strand" evidence="8">
    <location>
        <begin position="128"/>
        <end position="141"/>
    </location>
</feature>
<feature type="helix" evidence="8">
    <location>
        <begin position="144"/>
        <end position="155"/>
    </location>
</feature>
<feature type="turn" evidence="8">
    <location>
        <begin position="156"/>
        <end position="158"/>
    </location>
</feature>
<feature type="helix" evidence="8">
    <location>
        <begin position="161"/>
        <end position="163"/>
    </location>
</feature>
<feature type="strand" evidence="8">
    <location>
        <begin position="164"/>
        <end position="166"/>
    </location>
</feature>
<comment type="function">
    <text>Siderocalin-like lipocalin tightly binding a variety of bacterial ferric siderophores, also binds long-chain unsaturated fatty acids such as linoleic acid, oleic acid, arachidonic acid and, with a lower affinity, long chain saturated fatty acids such as steraic acid. May act as an antibacterial factor, through dual ligand specificity, both as a siderophore-sequestrating molecule and a lysophosphatidic acid (LPA) sensor.</text>
</comment>
<comment type="subunit">
    <text evidence="1">Monomer.</text>
</comment>
<comment type="subcellular location">
    <subcellularLocation>
        <location>Secreted</location>
    </subcellularLocation>
</comment>
<comment type="tissue specificity">
    <text evidence="3">Expressed in egg white (at protein level). Expressed in the magnum of the oviduct (at protein level) (PubMed:25436390). Preferentially synthesized in nonproliferating cells.</text>
</comment>
<comment type="induction">
    <text evidence="3">Down-regulated by dietary stress. Significantly decreased expression between days 0 to 5 in egg whites of eggs laid by corticosterone-fed hens (at protein level). Decreased expression at day 14 in the magnum of the oviduct in the corticosterone-fed laying hens.</text>
</comment>
<comment type="PTM">
    <text>Does not seem to be glycosylated.</text>
</comment>
<comment type="miscellaneous">
    <text>Developmentally regulated in chick embryo.</text>
</comment>
<comment type="similarity">
    <text evidence="5">Belongs to the calycin superfamily. Lipocalin family.</text>
</comment>
<proteinExistence type="evidence at protein level"/>
<name>EXFAB_CHICK</name>
<organism>
    <name type="scientific">Gallus gallus</name>
    <name type="common">Chicken</name>
    <dbReference type="NCBI Taxonomy" id="9031"/>
    <lineage>
        <taxon>Eukaryota</taxon>
        <taxon>Metazoa</taxon>
        <taxon>Chordata</taxon>
        <taxon>Craniata</taxon>
        <taxon>Vertebrata</taxon>
        <taxon>Euteleostomi</taxon>
        <taxon>Archelosauria</taxon>
        <taxon>Archosauria</taxon>
        <taxon>Dinosauria</taxon>
        <taxon>Saurischia</taxon>
        <taxon>Theropoda</taxon>
        <taxon>Coelurosauria</taxon>
        <taxon>Aves</taxon>
        <taxon>Neognathae</taxon>
        <taxon>Galloanserae</taxon>
        <taxon>Galliformes</taxon>
        <taxon>Phasianidae</taxon>
        <taxon>Phasianinae</taxon>
        <taxon>Gallus</taxon>
    </lineage>
</organism>
<protein>
    <recommendedName>
        <fullName>Extracellular fatty acid-binding protein</fullName>
        <shortName>Ex-FABP</shortName>
    </recommendedName>
    <alternativeName>
        <fullName>Protein Ch21</fullName>
    </alternativeName>
    <alternativeName>
        <fullName>Quiescence-specific protein</fullName>
    </alternativeName>
    <alternativeName>
        <fullName>p20K</fullName>
    </alternativeName>
</protein>